<comment type="function">
    <molecule>Isoform 1</molecule>
    <text evidence="2 5 8">Electroneutral proton-coupled antiporter concentrating zinc ions into a variety of intracellular organelles including endosomes, zymogen granules and mitochondria. Thereby, plays a crucial role in cellular zinc homeostasis to confer upon cells protection against its potential cytotoxicity (PubMed:21289295). Regulates the zinc concentration of milk, through the transport of zinc ions into secretory vesicles of mammary cells (Probable). By concentrating zinc ions into lysosomes participates to lysosomal-mediated cell death during early mammary gland involution (By similarity).</text>
</comment>
<comment type="function">
    <molecule>Isoform 2</molecule>
    <text evidence="8">Electroneutral proton-coupled antiporter mediating the efflux of zinc ions through the plasma membrane.</text>
</comment>
<comment type="catalytic activity">
    <reaction evidence="9">
        <text>Zn(2+)(in) + 2 H(+)(out) = Zn(2+)(out) + 2 H(+)(in)</text>
        <dbReference type="Rhea" id="RHEA:72627"/>
        <dbReference type="ChEBI" id="CHEBI:15378"/>
        <dbReference type="ChEBI" id="CHEBI:29105"/>
    </reaction>
</comment>
<comment type="subunit">
    <text evidence="2">Homodimer. Interacts (via lysosomal targeting motif) with AP3D1; in AP-3-mediated transport to lysosomes. Interacts with TMEM163.</text>
</comment>
<comment type="interaction">
    <interactant intactId="EBI-13945312">
        <id>Q2HJ10</id>
    </interactant>
    <interactant intactId="EBI-13945374">
        <id>Q3UVU3</id>
        <label>Slc30a10</label>
    </interactant>
    <organismsDiffer>false</organismsDiffer>
    <experiments>2</experiments>
</comment>
<comment type="subcellular location">
    <molecule>Isoform 1</molecule>
    <subcellularLocation>
        <location evidence="8">Cytoplasmic vesicle</location>
        <location evidence="8">Secretory vesicle membrane</location>
        <topology evidence="3">Multi-pass membrane protein</topology>
    </subcellularLocation>
    <subcellularLocation>
        <location evidence="4">Zymogen granule membrane</location>
        <topology evidence="3">Multi-pass membrane protein</topology>
    </subcellularLocation>
    <subcellularLocation>
        <location evidence="8">Endosome membrane</location>
        <topology evidence="3">Multi-pass membrane protein</topology>
    </subcellularLocation>
    <subcellularLocation>
        <location evidence="2">Lysosome membrane</location>
        <topology evidence="3">Multi-pass membrane protein</topology>
    </subcellularLocation>
    <subcellularLocation>
        <location evidence="5">Mitochondrion inner membrane</location>
        <topology evidence="3">Multi-pass membrane protein</topology>
    </subcellularLocation>
    <text evidence="2">Localization to lysosomes is induced by TNF-alpha.</text>
</comment>
<comment type="subcellular location">
    <molecule>Isoform 2</molecule>
    <subcellularLocation>
        <location evidence="8">Cell membrane</location>
        <topology evidence="3">Multi-pass membrane protein</topology>
    </subcellularLocation>
</comment>
<comment type="alternative products">
    <event type="alternative splicing"/>
    <isoform>
        <id>Q2HJ10-1</id>
        <name>1</name>
        <name evidence="6">Long isoform</name>
        <sequence type="displayed"/>
    </isoform>
    <isoform>
        <id>Q2HJ10-2</id>
        <name>2</name>
        <name evidence="6">Short isoform</name>
        <sequence type="described" ref="VSP_061730"/>
    </isoform>
</comment>
<comment type="induction">
    <text evidence="4">Down-regulated upon zinc starvation (at protein level). Up-regulated upon zinc intake (PubMed:20133611). Up-regulated by dexamethasone (PubMed:20133611).</text>
</comment>
<comment type="PTM">
    <text evidence="2">Phosphorylated at Ser-295. Phosphorylation at Ser-295 prevents localization to lysosomes. Dephosphorylation of Ser-295 which triggers localization to lysosomes, accumulation of zinc into lysosomes and lysosomal-mediated cell death is induced by TNF-alpha.</text>
</comment>
<comment type="similarity">
    <text evidence="7">Belongs to the cation diffusion facilitator (CDF) transporter (TC 2.A.4) family. SLC30A subfamily.</text>
</comment>
<feature type="chain" id="PRO_0000415850" description="Proton-coupled zinc antiporter SLC30A2">
    <location>
        <begin position="1"/>
        <end position="371"/>
    </location>
</feature>
<feature type="topological domain" description="Cytoplasmic" evidence="9">
    <location>
        <begin position="1"/>
        <end position="69"/>
    </location>
</feature>
<feature type="transmembrane region" description="Helical" evidence="3">
    <location>
        <begin position="70"/>
        <end position="90"/>
    </location>
</feature>
<feature type="topological domain" description="Lumenal" evidence="9">
    <location>
        <begin position="91"/>
        <end position="99"/>
    </location>
</feature>
<feature type="transmembrane region" description="Helical" evidence="3">
    <location>
        <begin position="100"/>
        <end position="120"/>
    </location>
</feature>
<feature type="topological domain" description="Cytoplasmic" evidence="9">
    <location>
        <begin position="121"/>
        <end position="136"/>
    </location>
</feature>
<feature type="transmembrane region" description="Helical" evidence="3">
    <location>
        <begin position="137"/>
        <end position="157"/>
    </location>
</feature>
<feature type="topological domain" description="Lumenal" evidence="9">
    <location>
        <begin position="158"/>
        <end position="172"/>
    </location>
</feature>
<feature type="transmembrane region" description="Helical" evidence="3">
    <location>
        <begin position="173"/>
        <end position="193"/>
    </location>
</feature>
<feature type="topological domain" description="Cytoplasmic" evidence="9">
    <location>
        <begin position="194"/>
        <end position="219"/>
    </location>
</feature>
<feature type="transmembrane region" description="Helical" evidence="3">
    <location>
        <begin position="220"/>
        <end position="240"/>
    </location>
</feature>
<feature type="topological domain" description="Lumenal" evidence="9">
    <location>
        <begin position="241"/>
        <end position="248"/>
    </location>
</feature>
<feature type="transmembrane region" description="Helical" evidence="3">
    <location>
        <begin position="249"/>
        <end position="269"/>
    </location>
</feature>
<feature type="topological domain" description="Cytoplasmic" evidence="9">
    <location>
        <begin position="270"/>
        <end position="303"/>
    </location>
</feature>
<feature type="transmembrane region" description="Helical" evidence="3">
    <location>
        <begin position="304"/>
        <end position="324"/>
    </location>
</feature>
<feature type="topological domain" description="Lumenal" evidence="9">
    <location>
        <begin position="325"/>
        <end position="371"/>
    </location>
</feature>
<feature type="short sequence motif" description="Mitochondrial localization signal" evidence="2">
    <location>
        <begin position="47"/>
        <end position="50"/>
    </location>
</feature>
<feature type="short sequence motif" description="Lysosomal targeting motif" evidence="2">
    <location>
        <begin position="293"/>
        <end position="294"/>
    </location>
</feature>
<feature type="binding site" description="in chain A" evidence="1">
    <location>
        <position position="49"/>
    </location>
    <ligand>
        <name>Zn(2+)</name>
        <dbReference type="ChEBI" id="CHEBI:29105"/>
        <label>2</label>
        <note>regulatory; ligand shared between homodimeric partners</note>
    </ligand>
</feature>
<feature type="binding site" evidence="1">
    <location>
        <position position="102"/>
    </location>
    <ligand>
        <name>Zn(2+)</name>
        <dbReference type="ChEBI" id="CHEBI:29105"/>
        <label>1</label>
        <note>transported zinc</note>
    </ligand>
</feature>
<feature type="binding site" evidence="1">
    <location>
        <position position="106"/>
    </location>
    <ligand>
        <name>Zn(2+)</name>
        <dbReference type="ChEBI" id="CHEBI:29105"/>
        <label>1</label>
        <note>transported zinc</note>
    </ligand>
</feature>
<feature type="binding site" evidence="1">
    <location>
        <position position="222"/>
    </location>
    <ligand>
        <name>Zn(2+)</name>
        <dbReference type="ChEBI" id="CHEBI:29105"/>
        <label>1</label>
        <note>transported zinc</note>
    </ligand>
</feature>
<feature type="binding site" evidence="1">
    <location>
        <position position="226"/>
    </location>
    <ligand>
        <name>Zn(2+)</name>
        <dbReference type="ChEBI" id="CHEBI:29105"/>
        <label>1</label>
        <note>transported zinc</note>
    </ligand>
</feature>
<feature type="binding site" description="in chain B" evidence="1">
    <location>
        <position position="303"/>
    </location>
    <ligand>
        <name>Zn(2+)</name>
        <dbReference type="ChEBI" id="CHEBI:29105"/>
        <label>2</label>
        <note>regulatory; ligand shared between homodimeric partners</note>
    </ligand>
</feature>
<feature type="binding site" description="in chain B" evidence="1">
    <location>
        <position position="320"/>
    </location>
    <ligand>
        <name>Zn(2+)</name>
        <dbReference type="ChEBI" id="CHEBI:29105"/>
        <label>2</label>
        <note>regulatory; ligand shared between homodimeric partners</note>
    </ligand>
</feature>
<feature type="binding site" description="in chain B" evidence="1">
    <location>
        <position position="354"/>
    </location>
    <ligand>
        <name>Zn(2+)</name>
        <dbReference type="ChEBI" id="CHEBI:29105"/>
        <label>2</label>
        <note>regulatory; ligand shared between homodimeric partners</note>
    </ligand>
</feature>
<feature type="modified residue" description="Phosphoserine" evidence="2">
    <location>
        <position position="295"/>
    </location>
</feature>
<feature type="splice variant" id="VSP_061730" description="In isoform 2.">
    <location>
        <begin position="87"/>
        <end position="135"/>
    </location>
</feature>
<proteinExistence type="evidence at protein level"/>
<name>ZNT2_MOUSE</name>
<protein>
    <recommendedName>
        <fullName evidence="7">Proton-coupled zinc antiporter SLC30A2</fullName>
    </recommendedName>
    <alternativeName>
        <fullName evidence="10">Solute carrier family 30 member 2</fullName>
    </alternativeName>
    <alternativeName>
        <fullName evidence="6">Zinc transporter 2</fullName>
        <shortName>ZnT-2</shortName>
    </alternativeName>
</protein>
<accession>Q2HJ10</accession>
<accession>D3Z5N0</accession>
<dbReference type="EMBL" id="AL669982">
    <property type="status" value="NOT_ANNOTATED_CDS"/>
    <property type="molecule type" value="Genomic_DNA"/>
</dbReference>
<dbReference type="EMBL" id="BC113751">
    <property type="protein sequence ID" value="AAI13752.1"/>
    <property type="molecule type" value="mRNA"/>
</dbReference>
<dbReference type="CCDS" id="CCDS38915.1">
    <molecule id="Q2HJ10-1"/>
</dbReference>
<dbReference type="RefSeq" id="NP_001034766.1">
    <molecule id="Q2HJ10-1"/>
    <property type="nucleotide sequence ID" value="NM_001039677.2"/>
</dbReference>
<dbReference type="SMR" id="Q2HJ10"/>
<dbReference type="FunCoup" id="Q2HJ10">
    <property type="interactions" value="166"/>
</dbReference>
<dbReference type="IntAct" id="Q2HJ10">
    <property type="interactions" value="2"/>
</dbReference>
<dbReference type="STRING" id="10090.ENSMUSP00000101500"/>
<dbReference type="iPTMnet" id="Q2HJ10"/>
<dbReference type="PhosphoSitePlus" id="Q2HJ10"/>
<dbReference type="PaxDb" id="10090-ENSMUSP00000101500"/>
<dbReference type="ProteomicsDB" id="275044"/>
<dbReference type="ProteomicsDB" id="359173"/>
<dbReference type="Antibodypedia" id="15992">
    <property type="antibodies" value="47 antibodies from 20 providers"/>
</dbReference>
<dbReference type="Ensembl" id="ENSMUST00000105873.8">
    <molecule id="Q2HJ10-2"/>
    <property type="protein sequence ID" value="ENSMUSP00000101499.2"/>
    <property type="gene ID" value="ENSMUSG00000028836.15"/>
</dbReference>
<dbReference type="Ensembl" id="ENSMUST00000105874.9">
    <molecule id="Q2HJ10-1"/>
    <property type="protein sequence ID" value="ENSMUSP00000101500.3"/>
    <property type="gene ID" value="ENSMUSG00000028836.15"/>
</dbReference>
<dbReference type="GeneID" id="230810"/>
<dbReference type="KEGG" id="mmu:230810"/>
<dbReference type="UCSC" id="uc008veu.2">
    <molecule id="Q2HJ10-1"/>
    <property type="organism name" value="mouse"/>
</dbReference>
<dbReference type="AGR" id="MGI:106637"/>
<dbReference type="CTD" id="7780"/>
<dbReference type="MGI" id="MGI:106637">
    <property type="gene designation" value="Slc30a2"/>
</dbReference>
<dbReference type="VEuPathDB" id="HostDB:ENSMUSG00000028836"/>
<dbReference type="eggNOG" id="KOG1482">
    <property type="taxonomic scope" value="Eukaryota"/>
</dbReference>
<dbReference type="GeneTree" id="ENSGT00940000156072"/>
<dbReference type="InParanoid" id="Q2HJ10"/>
<dbReference type="OMA" id="GHEKMLH"/>
<dbReference type="OrthoDB" id="9944568at2759"/>
<dbReference type="PhylomeDB" id="Q2HJ10"/>
<dbReference type="TreeFam" id="TF313382"/>
<dbReference type="BioGRID-ORCS" id="230810">
    <property type="hits" value="3 hits in 77 CRISPR screens"/>
</dbReference>
<dbReference type="ChiTaRS" id="Slc30a2">
    <property type="organism name" value="mouse"/>
</dbReference>
<dbReference type="PRO" id="PR:Q2HJ10"/>
<dbReference type="Proteomes" id="UP000000589">
    <property type="component" value="Chromosome 4"/>
</dbReference>
<dbReference type="RNAct" id="Q2HJ10">
    <property type="molecule type" value="protein"/>
</dbReference>
<dbReference type="Bgee" id="ENSMUSG00000028836">
    <property type="expression patterns" value="Expressed in ectoplacental cone and 88 other cell types or tissues"/>
</dbReference>
<dbReference type="ExpressionAtlas" id="Q2HJ10">
    <property type="expression patterns" value="baseline and differential"/>
</dbReference>
<dbReference type="GO" id="GO:0010008">
    <property type="term" value="C:endosome membrane"/>
    <property type="evidence" value="ECO:0000250"/>
    <property type="project" value="UniProtKB"/>
</dbReference>
<dbReference type="GO" id="GO:0005770">
    <property type="term" value="C:late endosome"/>
    <property type="evidence" value="ECO:0007669"/>
    <property type="project" value="Ensembl"/>
</dbReference>
<dbReference type="GO" id="GO:0005765">
    <property type="term" value="C:lysosomal membrane"/>
    <property type="evidence" value="ECO:0000250"/>
    <property type="project" value="UniProtKB"/>
</dbReference>
<dbReference type="GO" id="GO:0005743">
    <property type="term" value="C:mitochondrial inner membrane"/>
    <property type="evidence" value="ECO:0000314"/>
    <property type="project" value="UniProtKB"/>
</dbReference>
<dbReference type="GO" id="GO:0005886">
    <property type="term" value="C:plasma membrane"/>
    <property type="evidence" value="ECO:0007669"/>
    <property type="project" value="UniProtKB-SubCell"/>
</dbReference>
<dbReference type="GO" id="GO:0030658">
    <property type="term" value="C:transport vesicle membrane"/>
    <property type="evidence" value="ECO:0007669"/>
    <property type="project" value="UniProtKB-SubCell"/>
</dbReference>
<dbReference type="GO" id="GO:0042589">
    <property type="term" value="C:zymogen granule membrane"/>
    <property type="evidence" value="ECO:0000314"/>
    <property type="project" value="UniProtKB"/>
</dbReference>
<dbReference type="GO" id="GO:0042802">
    <property type="term" value="F:identical protein binding"/>
    <property type="evidence" value="ECO:0007669"/>
    <property type="project" value="Ensembl"/>
</dbReference>
<dbReference type="GO" id="GO:0046872">
    <property type="term" value="F:metal ion binding"/>
    <property type="evidence" value="ECO:0007669"/>
    <property type="project" value="UniProtKB-KW"/>
</dbReference>
<dbReference type="GO" id="GO:0140826">
    <property type="term" value="F:zinc:proton antiporter activity"/>
    <property type="evidence" value="ECO:0000250"/>
    <property type="project" value="UniProtKB"/>
</dbReference>
<dbReference type="GO" id="GO:0006882">
    <property type="term" value="P:intracellular zinc ion homeostasis"/>
    <property type="evidence" value="ECO:0000250"/>
    <property type="project" value="UniProtKB"/>
</dbReference>
<dbReference type="GO" id="GO:0140916">
    <property type="term" value="P:zinc ion import into lysosome"/>
    <property type="evidence" value="ECO:0000250"/>
    <property type="project" value="UniProtKB"/>
</dbReference>
<dbReference type="GO" id="GO:0140917">
    <property type="term" value="P:zinc ion import into mitochondrion"/>
    <property type="evidence" value="ECO:0000314"/>
    <property type="project" value="UniProtKB"/>
</dbReference>
<dbReference type="GO" id="GO:0140915">
    <property type="term" value="P:zinc ion import into zymogen granule"/>
    <property type="evidence" value="ECO:0000250"/>
    <property type="project" value="UniProtKB"/>
</dbReference>
<dbReference type="FunFam" id="1.20.1510.10:FF:000011">
    <property type="entry name" value="zinc transporter 2 isoform X1"/>
    <property type="match status" value="1"/>
</dbReference>
<dbReference type="Gene3D" id="1.20.1510.10">
    <property type="entry name" value="Cation efflux protein transmembrane domain"/>
    <property type="match status" value="1"/>
</dbReference>
<dbReference type="InterPro" id="IPR002524">
    <property type="entry name" value="Cation_efflux"/>
</dbReference>
<dbReference type="InterPro" id="IPR036837">
    <property type="entry name" value="Cation_efflux_CTD_sf"/>
</dbReference>
<dbReference type="InterPro" id="IPR027469">
    <property type="entry name" value="Cation_efflux_TMD_sf"/>
</dbReference>
<dbReference type="InterPro" id="IPR050681">
    <property type="entry name" value="CDF/SLC30A"/>
</dbReference>
<dbReference type="NCBIfam" id="TIGR01297">
    <property type="entry name" value="CDF"/>
    <property type="match status" value="1"/>
</dbReference>
<dbReference type="PANTHER" id="PTHR11562">
    <property type="entry name" value="CATION EFFLUX PROTEIN/ ZINC TRANSPORTER"/>
    <property type="match status" value="1"/>
</dbReference>
<dbReference type="PANTHER" id="PTHR11562:SF51">
    <property type="entry name" value="PROTON-COUPLED ZINC ANTIPORTER SLC30A2"/>
    <property type="match status" value="1"/>
</dbReference>
<dbReference type="Pfam" id="PF01545">
    <property type="entry name" value="Cation_efflux"/>
    <property type="match status" value="1"/>
</dbReference>
<dbReference type="SUPFAM" id="SSF160240">
    <property type="entry name" value="Cation efflux protein cytoplasmic domain-like"/>
    <property type="match status" value="1"/>
</dbReference>
<dbReference type="SUPFAM" id="SSF161111">
    <property type="entry name" value="Cation efflux protein transmembrane domain-like"/>
    <property type="match status" value="1"/>
</dbReference>
<gene>
    <name evidence="10" type="primary">Slc30a2</name>
    <name evidence="6" type="synonym">Znt2</name>
</gene>
<sequence length="371" mass="40639">MQTMDKQNLLESTRGARSFLGSLWKSEASRIPPVDLPAVELAVQSNHYCHAQKDSGSHPDPEKQRARRKLYVASAICLVFMIGEIIGGYLAQSLAIMTDAAHLLTDFASMLISLFALWVSSRPATKTMNFGWHRAEILGALLSVLSIWVVTGVLVYLAVQRLISGDYEIKGDTMLITSGCAVAVNLIMGLALHQSGHGHSHGNSRDDSSQQQNPSVRAAFIHVIGDLLQSVGVLVAAYIIYFKPEYKYVDPICTFLFSILVLGTTLTILRDVILVLMEGTPKGVDFTTVKNLLLSVDGVEALHSLHIWALTVAQPVLSVHIAIAQNADAQAVLKVARDRLQGKFNFHTMTIQIEKYSEDMKNCQACQGPLE</sequence>
<evidence type="ECO:0000250" key="1">
    <source>
        <dbReference type="UniProtKB" id="Q8IWU4"/>
    </source>
</evidence>
<evidence type="ECO:0000250" key="2">
    <source>
        <dbReference type="UniProtKB" id="Q9BRI3"/>
    </source>
</evidence>
<evidence type="ECO:0000255" key="3"/>
<evidence type="ECO:0000269" key="4">
    <source>
    </source>
</evidence>
<evidence type="ECO:0000269" key="5">
    <source>
    </source>
</evidence>
<evidence type="ECO:0000303" key="6">
    <source>
    </source>
</evidence>
<evidence type="ECO:0000305" key="7"/>
<evidence type="ECO:0000305" key="8">
    <source>
    </source>
</evidence>
<evidence type="ECO:0000305" key="9">
    <source>
    </source>
</evidence>
<evidence type="ECO:0000312" key="10">
    <source>
        <dbReference type="MGI" id="MGI:106637"/>
    </source>
</evidence>
<organism>
    <name type="scientific">Mus musculus</name>
    <name type="common">Mouse</name>
    <dbReference type="NCBI Taxonomy" id="10090"/>
    <lineage>
        <taxon>Eukaryota</taxon>
        <taxon>Metazoa</taxon>
        <taxon>Chordata</taxon>
        <taxon>Craniata</taxon>
        <taxon>Vertebrata</taxon>
        <taxon>Euteleostomi</taxon>
        <taxon>Mammalia</taxon>
        <taxon>Eutheria</taxon>
        <taxon>Euarchontoglires</taxon>
        <taxon>Glires</taxon>
        <taxon>Rodentia</taxon>
        <taxon>Myomorpha</taxon>
        <taxon>Muroidea</taxon>
        <taxon>Muridae</taxon>
        <taxon>Murinae</taxon>
        <taxon>Mus</taxon>
        <taxon>Mus</taxon>
    </lineage>
</organism>
<reference key="1">
    <citation type="journal article" date="2009" name="PLoS Biol.">
        <title>Lineage-specific biology revealed by a finished genome assembly of the mouse.</title>
        <authorList>
            <person name="Church D.M."/>
            <person name="Goodstadt L."/>
            <person name="Hillier L.W."/>
            <person name="Zody M.C."/>
            <person name="Goldstein S."/>
            <person name="She X."/>
            <person name="Bult C.J."/>
            <person name="Agarwala R."/>
            <person name="Cherry J.L."/>
            <person name="DiCuccio M."/>
            <person name="Hlavina W."/>
            <person name="Kapustin Y."/>
            <person name="Meric P."/>
            <person name="Maglott D."/>
            <person name="Birtle Z."/>
            <person name="Marques A.C."/>
            <person name="Graves T."/>
            <person name="Zhou S."/>
            <person name="Teague B."/>
            <person name="Potamousis K."/>
            <person name="Churas C."/>
            <person name="Place M."/>
            <person name="Herschleb J."/>
            <person name="Runnheim R."/>
            <person name="Forrest D."/>
            <person name="Amos-Landgraf J."/>
            <person name="Schwartz D.C."/>
            <person name="Cheng Z."/>
            <person name="Lindblad-Toh K."/>
            <person name="Eichler E.E."/>
            <person name="Ponting C.P."/>
        </authorList>
    </citation>
    <scope>NUCLEOTIDE SEQUENCE [LARGE SCALE GENOMIC DNA]</scope>
    <source>
        <strain>C57BL/6J</strain>
    </source>
</reference>
<reference key="2">
    <citation type="journal article" date="2004" name="Genome Res.">
        <title>The status, quality, and expansion of the NIH full-length cDNA project: the Mammalian Gene Collection (MGC).</title>
        <authorList>
            <consortium name="The MGC Project Team"/>
        </authorList>
    </citation>
    <scope>NUCLEOTIDE SEQUENCE [LARGE SCALE MRNA]</scope>
</reference>
<reference key="3">
    <citation type="journal article" date="2009" name="Biochem. J.">
        <title>Zinc transporter-2 (ZnT2) variants are localized to distinct subcellular compartments and functionally transport zinc.</title>
        <authorList>
            <person name="Lopez V."/>
            <person name="Kelleher S.L."/>
        </authorList>
    </citation>
    <scope>FUNCTION (ISOFORMS 1 AND 2)</scope>
    <scope>SUBCELLULAR LOCATION (ISOFORMS 1 AND 2)</scope>
</reference>
<reference key="4">
    <citation type="journal article" date="2010" name="Proc. Natl. Acad. Sci. U.S.A.">
        <title>STAT5-glucocorticoid receptor interaction and MTF-1 regulate the expression of ZnT2 (Slc30a2) in pancreatic acinar cells.</title>
        <authorList>
            <person name="Guo L."/>
            <person name="Lichten L.A."/>
            <person name="Ryu M.S."/>
            <person name="Liuzzi J.P."/>
            <person name="Wang F."/>
            <person name="Cousins R.J."/>
        </authorList>
    </citation>
    <scope>SUBCELLULAR LOCATION</scope>
    <scope>INDUCTION</scope>
</reference>
<reference key="5">
    <citation type="journal article" date="2011" name="Am. J. Physiol.">
        <title>A histidine-rich motif mediates mitochondrial localization of ZnT2 to modulate mitochondrial function.</title>
        <authorList>
            <person name="Seo Y.A."/>
            <person name="Lopez V."/>
            <person name="Kelleher S.L."/>
        </authorList>
    </citation>
    <scope>FUNCTION</scope>
    <scope>TRANSPORTER ACTIVITY</scope>
    <scope>SUBCELLULAR LOCATION</scope>
    <scope>TOPOLOGY</scope>
</reference>
<keyword id="KW-0025">Alternative splicing</keyword>
<keyword id="KW-0050">Antiport</keyword>
<keyword id="KW-1003">Cell membrane</keyword>
<keyword id="KW-0968">Cytoplasmic vesicle</keyword>
<keyword id="KW-0967">Endosome</keyword>
<keyword id="KW-0406">Ion transport</keyword>
<keyword id="KW-0458">Lysosome</keyword>
<keyword id="KW-0472">Membrane</keyword>
<keyword id="KW-0479">Metal-binding</keyword>
<keyword id="KW-0496">Mitochondrion</keyword>
<keyword id="KW-0999">Mitochondrion inner membrane</keyword>
<keyword id="KW-0597">Phosphoprotein</keyword>
<keyword id="KW-1185">Reference proteome</keyword>
<keyword id="KW-0812">Transmembrane</keyword>
<keyword id="KW-1133">Transmembrane helix</keyword>
<keyword id="KW-0813">Transport</keyword>
<keyword id="KW-0862">Zinc</keyword>
<keyword id="KW-0864">Zinc transport</keyword>